<feature type="initiator methionine" description="Removed" evidence="12">
    <location>
        <position position="1"/>
    </location>
</feature>
<feature type="chain" id="PRO_0000145590" description="Glyceraldehyde-3-phosphate dehydrogenase 2">
    <location>
        <begin position="2"/>
        <end position="332"/>
    </location>
</feature>
<feature type="active site" description="Nucleophile" evidence="5">
    <location>
        <position position="150"/>
    </location>
</feature>
<feature type="binding site" evidence="1">
    <location>
        <position position="11"/>
    </location>
    <ligand>
        <name>NAD(+)</name>
        <dbReference type="ChEBI" id="CHEBI:57540"/>
    </ligand>
</feature>
<feature type="binding site" evidence="1">
    <location>
        <position position="12"/>
    </location>
    <ligand>
        <name>NAD(+)</name>
        <dbReference type="ChEBI" id="CHEBI:57540"/>
    </ligand>
</feature>
<feature type="binding site" evidence="1">
    <location>
        <position position="33"/>
    </location>
    <ligand>
        <name>NAD(+)</name>
        <dbReference type="ChEBI" id="CHEBI:57540"/>
    </ligand>
</feature>
<feature type="binding site" evidence="1">
    <location>
        <position position="120"/>
    </location>
    <ligand>
        <name>NAD(+)</name>
        <dbReference type="ChEBI" id="CHEBI:57540"/>
    </ligand>
</feature>
<feature type="binding site" evidence="4">
    <location>
        <begin position="149"/>
        <end position="151"/>
    </location>
    <ligand>
        <name>D-glyceraldehyde 3-phosphate</name>
        <dbReference type="ChEBI" id="CHEBI:59776"/>
    </ligand>
</feature>
<feature type="binding site" evidence="4">
    <location>
        <position position="180"/>
    </location>
    <ligand>
        <name>D-glyceraldehyde 3-phosphate</name>
        <dbReference type="ChEBI" id="CHEBI:59776"/>
    </ligand>
</feature>
<feature type="binding site" evidence="4">
    <location>
        <begin position="209"/>
        <end position="210"/>
    </location>
    <ligand>
        <name>D-glyceraldehyde 3-phosphate</name>
        <dbReference type="ChEBI" id="CHEBI:59776"/>
    </ligand>
</feature>
<feature type="binding site" evidence="4">
    <location>
        <position position="232"/>
    </location>
    <ligand>
        <name>D-glyceraldehyde 3-phosphate</name>
        <dbReference type="ChEBI" id="CHEBI:59776"/>
    </ligand>
</feature>
<feature type="binding site" evidence="1">
    <location>
        <position position="314"/>
    </location>
    <ligand>
        <name>NAD(+)</name>
        <dbReference type="ChEBI" id="CHEBI:57540"/>
    </ligand>
</feature>
<feature type="binding site" evidence="1">
    <location>
        <position position="318"/>
    </location>
    <ligand>
        <name>NAD(+)</name>
        <dbReference type="ChEBI" id="CHEBI:57540"/>
    </ligand>
</feature>
<feature type="site" description="Activates thiol group during catalysis" evidence="3">
    <location>
        <position position="177"/>
    </location>
</feature>
<feature type="modified residue" description="Phosphoserine" evidence="1">
    <location>
        <position position="302"/>
    </location>
</feature>
<feature type="cross-link" description="Glycyl lysine isopeptide (Lys-Gly) (interchain with G-Cter in ubiquitin)" evidence="1">
    <location>
        <position position="46"/>
    </location>
</feature>
<feature type="cross-link" description="Glycyl lysine isopeptide (Lys-Gly) (interchain with G-Cter in ubiquitin)" evidence="16">
    <location>
        <position position="63"/>
    </location>
</feature>
<feature type="sequence conflict" description="In Ref. 5; AA sequence." evidence="15" ref="5">
    <original>E</original>
    <variation>A</variation>
    <location>
        <position position="77"/>
    </location>
</feature>
<keyword id="KW-0963">Cytoplasm</keyword>
<keyword id="KW-0903">Direct protein sequencing</keyword>
<keyword id="KW-0324">Glycolysis</keyword>
<keyword id="KW-1017">Isopeptide bond</keyword>
<keyword id="KW-0520">NAD</keyword>
<keyword id="KW-0560">Oxidoreductase</keyword>
<keyword id="KW-0597">Phosphoprotein</keyword>
<keyword id="KW-1185">Reference proteome</keyword>
<keyword id="KW-0832">Ubl conjugation</keyword>
<proteinExistence type="evidence at protein level"/>
<organism>
    <name type="scientific">Saccharomyces cerevisiae (strain ATCC 204508 / S288c)</name>
    <name type="common">Baker's yeast</name>
    <dbReference type="NCBI Taxonomy" id="559292"/>
    <lineage>
        <taxon>Eukaryota</taxon>
        <taxon>Fungi</taxon>
        <taxon>Dikarya</taxon>
        <taxon>Ascomycota</taxon>
        <taxon>Saccharomycotina</taxon>
        <taxon>Saccharomycetes</taxon>
        <taxon>Saccharomycetales</taxon>
        <taxon>Saccharomycetaceae</taxon>
        <taxon>Saccharomyces</taxon>
    </lineage>
</organism>
<dbReference type="EC" id="1.2.1.12" evidence="9"/>
<dbReference type="EMBL" id="X60157">
    <property type="protein sequence ID" value="CAA42725.1"/>
    <property type="molecule type" value="Genomic_DNA"/>
</dbReference>
<dbReference type="EMBL" id="V01301">
    <property type="protein sequence ID" value="CAA24608.1"/>
    <property type="molecule type" value="Genomic_DNA"/>
</dbReference>
<dbReference type="EMBL" id="X87611">
    <property type="protein sequence ID" value="CAA60931.1"/>
    <property type="molecule type" value="Genomic_DNA"/>
</dbReference>
<dbReference type="EMBL" id="Z49509">
    <property type="protein sequence ID" value="CAA89531.1"/>
    <property type="molecule type" value="Genomic_DNA"/>
</dbReference>
<dbReference type="EMBL" id="BK006943">
    <property type="protein sequence ID" value="DAA08800.1"/>
    <property type="molecule type" value="Genomic_DNA"/>
</dbReference>
<dbReference type="PIR" id="S57024">
    <property type="entry name" value="DEBYG1"/>
</dbReference>
<dbReference type="RefSeq" id="NP_012542.1">
    <property type="nucleotide sequence ID" value="NM_001181666.1"/>
</dbReference>
<dbReference type="SMR" id="P00358"/>
<dbReference type="BioGRID" id="33765">
    <property type="interactions" value="192"/>
</dbReference>
<dbReference type="DIP" id="DIP-1951N"/>
<dbReference type="FunCoup" id="P00358">
    <property type="interactions" value="1311"/>
</dbReference>
<dbReference type="IntAct" id="P00358">
    <property type="interactions" value="99"/>
</dbReference>
<dbReference type="MINT" id="P00358"/>
<dbReference type="STRING" id="4932.YJR009C"/>
<dbReference type="MoonDB" id="P00358">
    <property type="type" value="Curated"/>
</dbReference>
<dbReference type="CarbonylDB" id="P00358"/>
<dbReference type="iPTMnet" id="P00358"/>
<dbReference type="PaxDb" id="4932-YJR009C"/>
<dbReference type="PeptideAtlas" id="P00358"/>
<dbReference type="TopDownProteomics" id="P00358"/>
<dbReference type="EnsemblFungi" id="YJR009C_mRNA">
    <property type="protein sequence ID" value="YJR009C"/>
    <property type="gene ID" value="YJR009C"/>
</dbReference>
<dbReference type="GeneID" id="853465"/>
<dbReference type="KEGG" id="sce:YJR009C"/>
<dbReference type="AGR" id="SGD:S000003769"/>
<dbReference type="SGD" id="S000003769">
    <property type="gene designation" value="TDH2"/>
</dbReference>
<dbReference type="VEuPathDB" id="FungiDB:YJR009C"/>
<dbReference type="eggNOG" id="KOG0657">
    <property type="taxonomic scope" value="Eukaryota"/>
</dbReference>
<dbReference type="GeneTree" id="ENSGT00940000153298"/>
<dbReference type="HOGENOM" id="CLU_030140_0_3_1"/>
<dbReference type="InParanoid" id="P00358"/>
<dbReference type="OMA" id="TCQMIRL"/>
<dbReference type="OrthoDB" id="1152826at2759"/>
<dbReference type="BioCyc" id="YEAST:YJR009C-MONOMER"/>
<dbReference type="Reactome" id="R-SCE-70171">
    <property type="pathway name" value="Glycolysis"/>
</dbReference>
<dbReference type="Reactome" id="R-SCE-70263">
    <property type="pathway name" value="Gluconeogenesis"/>
</dbReference>
<dbReference type="SABIO-RK" id="P00358"/>
<dbReference type="UniPathway" id="UPA00109">
    <property type="reaction ID" value="UER00184"/>
</dbReference>
<dbReference type="BioGRID-ORCS" id="853465">
    <property type="hits" value="8 hits in 10 CRISPR screens"/>
</dbReference>
<dbReference type="PRO" id="PR:P00358"/>
<dbReference type="Proteomes" id="UP000002311">
    <property type="component" value="Chromosome X"/>
</dbReference>
<dbReference type="RNAct" id="P00358">
    <property type="molecule type" value="protein"/>
</dbReference>
<dbReference type="GO" id="GO:0005737">
    <property type="term" value="C:cytoplasm"/>
    <property type="evidence" value="ECO:0007005"/>
    <property type="project" value="SGD"/>
</dbReference>
<dbReference type="GO" id="GO:0005829">
    <property type="term" value="C:cytosol"/>
    <property type="evidence" value="ECO:0000314"/>
    <property type="project" value="SGD"/>
</dbReference>
<dbReference type="GO" id="GO:0009277">
    <property type="term" value="C:fungal-type cell wall"/>
    <property type="evidence" value="ECO:0000314"/>
    <property type="project" value="SGD"/>
</dbReference>
<dbReference type="GO" id="GO:0005811">
    <property type="term" value="C:lipid droplet"/>
    <property type="evidence" value="ECO:0000314"/>
    <property type="project" value="SGD"/>
</dbReference>
<dbReference type="GO" id="GO:0005739">
    <property type="term" value="C:mitochondrion"/>
    <property type="evidence" value="ECO:0000314"/>
    <property type="project" value="SGD"/>
</dbReference>
<dbReference type="GO" id="GO:0005634">
    <property type="term" value="C:nucleus"/>
    <property type="evidence" value="ECO:0007005"/>
    <property type="project" value="SGD"/>
</dbReference>
<dbReference type="GO" id="GO:0005886">
    <property type="term" value="C:plasma membrane"/>
    <property type="evidence" value="ECO:0007005"/>
    <property type="project" value="SGD"/>
</dbReference>
<dbReference type="GO" id="GO:0004365">
    <property type="term" value="F:glyceraldehyde-3-phosphate dehydrogenase (NAD+) (phosphorylating) activity"/>
    <property type="evidence" value="ECO:0000314"/>
    <property type="project" value="SGD"/>
</dbReference>
<dbReference type="GO" id="GO:1904408">
    <property type="term" value="F:melatonin binding"/>
    <property type="evidence" value="ECO:0000314"/>
    <property type="project" value="SGD"/>
</dbReference>
<dbReference type="GO" id="GO:0051287">
    <property type="term" value="F:NAD binding"/>
    <property type="evidence" value="ECO:0007669"/>
    <property type="project" value="InterPro"/>
</dbReference>
<dbReference type="GO" id="GO:0050661">
    <property type="term" value="F:NADP binding"/>
    <property type="evidence" value="ECO:0007669"/>
    <property type="project" value="InterPro"/>
</dbReference>
<dbReference type="GO" id="GO:1990841">
    <property type="term" value="F:promoter-specific chromatin binding"/>
    <property type="evidence" value="ECO:0000314"/>
    <property type="project" value="SGD"/>
</dbReference>
<dbReference type="GO" id="GO:0006915">
    <property type="term" value="P:apoptotic process"/>
    <property type="evidence" value="ECO:0000315"/>
    <property type="project" value="SGD"/>
</dbReference>
<dbReference type="GO" id="GO:0006094">
    <property type="term" value="P:gluconeogenesis"/>
    <property type="evidence" value="ECO:0000270"/>
    <property type="project" value="SGD"/>
</dbReference>
<dbReference type="GO" id="GO:0006096">
    <property type="term" value="P:glycolytic process"/>
    <property type="evidence" value="ECO:0000270"/>
    <property type="project" value="SGD"/>
</dbReference>
<dbReference type="GO" id="GO:0072593">
    <property type="term" value="P:reactive oxygen species metabolic process"/>
    <property type="evidence" value="ECO:0000315"/>
    <property type="project" value="SGD"/>
</dbReference>
<dbReference type="CDD" id="cd18126">
    <property type="entry name" value="GAPDH_I_C"/>
    <property type="match status" value="1"/>
</dbReference>
<dbReference type="CDD" id="cd05214">
    <property type="entry name" value="GAPDH_I_N"/>
    <property type="match status" value="1"/>
</dbReference>
<dbReference type="FunFam" id="3.30.360.10:FF:000001">
    <property type="entry name" value="Glyceraldehyde-3-phosphate dehydrogenase"/>
    <property type="match status" value="1"/>
</dbReference>
<dbReference type="FunFam" id="3.40.50.720:FF:000020">
    <property type="entry name" value="Glyceraldehyde-3-phosphate dehydrogenase"/>
    <property type="match status" value="1"/>
</dbReference>
<dbReference type="Gene3D" id="3.30.360.10">
    <property type="entry name" value="Dihydrodipicolinate Reductase, domain 2"/>
    <property type="match status" value="1"/>
</dbReference>
<dbReference type="Gene3D" id="3.40.50.720">
    <property type="entry name" value="NAD(P)-binding Rossmann-like Domain"/>
    <property type="match status" value="1"/>
</dbReference>
<dbReference type="InterPro" id="IPR020831">
    <property type="entry name" value="GlycerAld/Erythrose_P_DH"/>
</dbReference>
<dbReference type="InterPro" id="IPR020830">
    <property type="entry name" value="GlycerAld_3-P_DH_AS"/>
</dbReference>
<dbReference type="InterPro" id="IPR020829">
    <property type="entry name" value="GlycerAld_3-P_DH_cat"/>
</dbReference>
<dbReference type="InterPro" id="IPR020828">
    <property type="entry name" value="GlycerAld_3-P_DH_NAD(P)-bd"/>
</dbReference>
<dbReference type="InterPro" id="IPR006424">
    <property type="entry name" value="Glyceraldehyde-3-P_DH_1"/>
</dbReference>
<dbReference type="InterPro" id="IPR036291">
    <property type="entry name" value="NAD(P)-bd_dom_sf"/>
</dbReference>
<dbReference type="NCBIfam" id="TIGR01534">
    <property type="entry name" value="GAPDH-I"/>
    <property type="match status" value="1"/>
</dbReference>
<dbReference type="PANTHER" id="PTHR10836">
    <property type="entry name" value="GLYCERALDEHYDE 3-PHOSPHATE DEHYDROGENASE"/>
    <property type="match status" value="1"/>
</dbReference>
<dbReference type="PANTHER" id="PTHR10836:SF76">
    <property type="entry name" value="GLYCERALDEHYDE-3-PHOSPHATE DEHYDROGENASE-RELATED"/>
    <property type="match status" value="1"/>
</dbReference>
<dbReference type="Pfam" id="PF02800">
    <property type="entry name" value="Gp_dh_C"/>
    <property type="match status" value="1"/>
</dbReference>
<dbReference type="Pfam" id="PF00044">
    <property type="entry name" value="Gp_dh_N"/>
    <property type="match status" value="1"/>
</dbReference>
<dbReference type="PIRSF" id="PIRSF000149">
    <property type="entry name" value="GAP_DH"/>
    <property type="match status" value="1"/>
</dbReference>
<dbReference type="PRINTS" id="PR00078">
    <property type="entry name" value="G3PDHDRGNASE"/>
</dbReference>
<dbReference type="SMART" id="SM00846">
    <property type="entry name" value="Gp_dh_N"/>
    <property type="match status" value="1"/>
</dbReference>
<dbReference type="SUPFAM" id="SSF55347">
    <property type="entry name" value="Glyceraldehyde-3-phosphate dehydrogenase-like, C-terminal domain"/>
    <property type="match status" value="1"/>
</dbReference>
<dbReference type="SUPFAM" id="SSF51735">
    <property type="entry name" value="NAD(P)-binding Rossmann-fold domains"/>
    <property type="match status" value="1"/>
</dbReference>
<dbReference type="PROSITE" id="PS00071">
    <property type="entry name" value="GAPDH"/>
    <property type="match status" value="1"/>
</dbReference>
<accession>P00358</accession>
<accession>D6VWI4</accession>
<comment type="function">
    <text evidence="8 9">Glyceraldehyde-3-phosphate dehydrogenase (GAPDH) involved in glycolysis and gluconeogenesis (PubMed:2999100). Catalyzes the reaction of glyceraldehyde-3-phosphate to 1,3 bis-phosphoglycerate (PubMed:3905788). The contribution of the TDH1, TDH2, and TDH3 to the total glyceraldehyde-3-phosphate dehydrogenase activity is 10-15, 25-30, and 50-60%, respectively (PubMed:3905788).</text>
</comment>
<comment type="function">
    <text evidence="6 10">As a side activity, catalyzes the hydration of the nicotinamide ring of NADH or NADPH at the C6 position to give the corresponding hydrates, NADHX and NADPHX, which exist as R and S epimers, that cannot act as electron donors or acceptors and inhibit several dehydrogenases, making them toxic.</text>
</comment>
<comment type="catalytic activity">
    <reaction evidence="9">
        <text>D-glyceraldehyde 3-phosphate + phosphate + NAD(+) = (2R)-3-phospho-glyceroyl phosphate + NADH + H(+)</text>
        <dbReference type="Rhea" id="RHEA:10300"/>
        <dbReference type="ChEBI" id="CHEBI:15378"/>
        <dbReference type="ChEBI" id="CHEBI:43474"/>
        <dbReference type="ChEBI" id="CHEBI:57540"/>
        <dbReference type="ChEBI" id="CHEBI:57604"/>
        <dbReference type="ChEBI" id="CHEBI:57945"/>
        <dbReference type="ChEBI" id="CHEBI:59776"/>
        <dbReference type="EC" id="1.2.1.12"/>
    </reaction>
    <physiologicalReaction direction="left-to-right" evidence="9">
        <dbReference type="Rhea" id="RHEA:10301"/>
    </physiologicalReaction>
</comment>
<comment type="catalytic activity">
    <reaction evidence="6 10">
        <text>NADH + H2O = (6R)-NADHX</text>
        <dbReference type="Rhea" id="RHEA:57360"/>
        <dbReference type="ChEBI" id="CHEBI:15377"/>
        <dbReference type="ChEBI" id="CHEBI:57945"/>
        <dbReference type="ChEBI" id="CHEBI:64075"/>
    </reaction>
    <physiologicalReaction direction="left-to-right" evidence="6 10">
        <dbReference type="Rhea" id="RHEA:57361"/>
    </physiologicalReaction>
</comment>
<comment type="catalytic activity">
    <reaction evidence="6 10">
        <text>NADH + H2O = (6S)-NADHX</text>
        <dbReference type="Rhea" id="RHEA:57364"/>
        <dbReference type="ChEBI" id="CHEBI:15377"/>
        <dbReference type="ChEBI" id="CHEBI:57945"/>
        <dbReference type="ChEBI" id="CHEBI:64074"/>
    </reaction>
    <physiologicalReaction direction="left-to-right" evidence="6 10">
        <dbReference type="Rhea" id="RHEA:57365"/>
    </physiologicalReaction>
</comment>
<comment type="catalytic activity">
    <reaction evidence="6 10">
        <text>NADPH + H2O = (6R)-NADPHX</text>
        <dbReference type="Rhea" id="RHEA:57368"/>
        <dbReference type="ChEBI" id="CHEBI:15377"/>
        <dbReference type="ChEBI" id="CHEBI:57783"/>
        <dbReference type="ChEBI" id="CHEBI:64077"/>
    </reaction>
    <physiologicalReaction direction="left-to-right" evidence="6 10">
        <dbReference type="Rhea" id="RHEA:57369"/>
    </physiologicalReaction>
</comment>
<comment type="catalytic activity">
    <reaction evidence="6 10">
        <text>NADPH + H2O = (6S)-NADPHX</text>
        <dbReference type="Rhea" id="RHEA:57372"/>
        <dbReference type="ChEBI" id="CHEBI:15377"/>
        <dbReference type="ChEBI" id="CHEBI:57783"/>
        <dbReference type="ChEBI" id="CHEBI:64076"/>
    </reaction>
    <physiologicalReaction direction="left-to-right" evidence="6 10">
        <dbReference type="Rhea" id="RHEA:57373"/>
    </physiologicalReaction>
</comment>
<comment type="biophysicochemical properties">
    <kinetics>
        <KM evidence="14">0.37 uM for NAD(+)</KM>
    </kinetics>
</comment>
<comment type="pathway">
    <text evidence="9">Carbohydrate degradation; glycolysis; pyruvate from D-glyceraldehyde 3-phosphate: step 1/5.</text>
</comment>
<comment type="subunit">
    <text evidence="9">Homotetramer.</text>
</comment>
<comment type="interaction">
    <interactant intactId="EBI-7212">
        <id>P00358</id>
    </interactant>
    <interactant intactId="EBI-7000452">
        <id>P0CG63</id>
        <label>UBI4</label>
    </interactant>
    <organismsDiffer>false</organismsDiffer>
    <experiments>2</experiments>
</comment>
<comment type="subcellular location">
    <subcellularLocation>
        <location evidence="2">Cytoplasm</location>
    </subcellularLocation>
</comment>
<comment type="induction">
    <text evidence="11">Expression is strongly repressed by a heat shock.</text>
</comment>
<comment type="disruption phenotype">
    <text evidence="8">Does not affect growth when ethanol is used as carbon source but reduces growth when glucose is used as carbon source.</text>
</comment>
<comment type="miscellaneous">
    <text evidence="7">Present with 121000 molecules/cell in log phase SD medium.</text>
</comment>
<comment type="similarity">
    <text evidence="15">Belongs to the glyceraldehyde-3-phosphate dehydrogenase family.</text>
</comment>
<reference key="1">
    <citation type="journal article" date="1991" name="Yeast">
        <title>TDH2 is linked to MET3 on chromosome X of Saccharomyces cerevisiae.</title>
        <authorList>
            <person name="Mountain H.A."/>
            <person name="Korch C."/>
        </authorList>
    </citation>
    <scope>NUCLEOTIDE SEQUENCE [GENOMIC DNA]</scope>
    <source>
        <strain>ATCC 204508 / S288c</strain>
    </source>
</reference>
<reference key="2">
    <citation type="journal article" date="1980" name="J. Biol. Chem.">
        <title>Structural comparison of two nontandemly repeated yeast glyceraldehyde-3-phosphate dehydrogenase genes.</title>
        <authorList>
            <person name="Holland J.P."/>
            <person name="Holland M.J."/>
        </authorList>
    </citation>
    <scope>NUCLEOTIDE SEQUENCE [GENOMIC DNA]</scope>
</reference>
<reference key="3">
    <citation type="journal article" date="1996" name="EMBO J.">
        <title>Complete nucleotide sequence of Saccharomyces cerevisiae chromosome X.</title>
        <authorList>
            <person name="Galibert F."/>
            <person name="Alexandraki D."/>
            <person name="Baur A."/>
            <person name="Boles E."/>
            <person name="Chalwatzis N."/>
            <person name="Chuat J.-C."/>
            <person name="Coster F."/>
            <person name="Cziepluch C."/>
            <person name="de Haan M."/>
            <person name="Domdey H."/>
            <person name="Durand P."/>
            <person name="Entian K.-D."/>
            <person name="Gatius M."/>
            <person name="Goffeau A."/>
            <person name="Grivell L.A."/>
            <person name="Hennemann A."/>
            <person name="Herbert C.J."/>
            <person name="Heumann K."/>
            <person name="Hilger F."/>
            <person name="Hollenberg C.P."/>
            <person name="Huang M.-E."/>
            <person name="Jacq C."/>
            <person name="Jauniaux J.-C."/>
            <person name="Katsoulou C."/>
            <person name="Kirchrath L."/>
            <person name="Kleine K."/>
            <person name="Kordes E."/>
            <person name="Koetter P."/>
            <person name="Liebl S."/>
            <person name="Louis E.J."/>
            <person name="Manus V."/>
            <person name="Mewes H.-W."/>
            <person name="Miosga T."/>
            <person name="Obermaier B."/>
            <person name="Perea J."/>
            <person name="Pohl T.M."/>
            <person name="Portetelle D."/>
            <person name="Pujol A."/>
            <person name="Purnelle B."/>
            <person name="Ramezani Rad M."/>
            <person name="Rasmussen S.W."/>
            <person name="Rose M."/>
            <person name="Rossau R."/>
            <person name="Schaaff-Gerstenschlaeger I."/>
            <person name="Smits P.H.M."/>
            <person name="Scarcez T."/>
            <person name="Soriano N."/>
            <person name="To Van D."/>
            <person name="Tzermia M."/>
            <person name="Van Broekhoven A."/>
            <person name="Vandenbol M."/>
            <person name="Wedler H."/>
            <person name="von Wettstein D."/>
            <person name="Wambutt R."/>
            <person name="Zagulski M."/>
            <person name="Zollner A."/>
            <person name="Karpfinger-Hartl L."/>
        </authorList>
    </citation>
    <scope>NUCLEOTIDE SEQUENCE [LARGE SCALE GENOMIC DNA]</scope>
    <source>
        <strain>ATCC 204508 / S288c</strain>
    </source>
</reference>
<reference key="4">
    <citation type="journal article" date="2014" name="G3 (Bethesda)">
        <title>The reference genome sequence of Saccharomyces cerevisiae: Then and now.</title>
        <authorList>
            <person name="Engel S.R."/>
            <person name="Dietrich F.S."/>
            <person name="Fisk D.G."/>
            <person name="Binkley G."/>
            <person name="Balakrishnan R."/>
            <person name="Costanzo M.C."/>
            <person name="Dwight S.S."/>
            <person name="Hitz B.C."/>
            <person name="Karra K."/>
            <person name="Nash R.S."/>
            <person name="Weng S."/>
            <person name="Wong E.D."/>
            <person name="Lloyd P."/>
            <person name="Skrzypek M.S."/>
            <person name="Miyasato S.R."/>
            <person name="Simison M."/>
            <person name="Cherry J.M."/>
        </authorList>
    </citation>
    <scope>GENOME REANNOTATION</scope>
    <source>
        <strain>ATCC 204508 / S288c</strain>
    </source>
</reference>
<reference key="5">
    <citation type="journal article" date="1995" name="Electrophoresis">
        <title>Gene linkage of two-dimensional polyacrylamide gel electrophoresis resolved proteins from isogene families in Saccharomyces cerevisiae by microsequencing of in-gel trypsin generated peptides.</title>
        <authorList>
            <person name="Norbeck J."/>
            <person name="Blomberg A."/>
        </authorList>
    </citation>
    <scope>PROTEIN SEQUENCE OF 24-37; 72-77; 81-86; 199-213; 226-232 AND 322-331</scope>
    <source>
        <strain>ATCC 38531 / Y41</strain>
    </source>
</reference>
<reference key="6">
    <citation type="submission" date="1996-02" db="UniProtKB">
        <authorList>
            <person name="Frutiger S."/>
            <person name="Hughes G.J."/>
            <person name="Sanchez J.-C."/>
            <person name="Hochstrasser D.F."/>
        </authorList>
    </citation>
    <scope>PROTEIN SEQUENCE OF 2-13</scope>
    <source>
        <strain>ATCC 26786 / X2180-1A</strain>
    </source>
</reference>
<reference key="7">
    <citation type="journal article" date="1954" name="J. Biol. Chem.">
        <title>The action of glyceraldehyde-3-phosphate dehydrogenase on reduced diphosphopyridine nucleotide.</title>
        <authorList>
            <person name="Rafter G.W."/>
            <person name="Chaykin S."/>
            <person name="Krebs E.G."/>
        </authorList>
    </citation>
    <scope>FUNCTION</scope>
    <scope>CATALYTIC ACTIVITY</scope>
</reference>
<reference key="8">
    <citation type="journal article" date="1974" name="Biochemistry">
        <title>Glyceraldehyde-3-phosphate dehydrogenase catalyzed hydration of the 5-6 double bond of reduced beta-nicotinamide adenine dinucleotide (betaNADH). Formation of beta-6-hydroxy-1,4,5,6-tetrahydronicotinamide adenine dinucleotide.</title>
        <authorList>
            <person name="Oppenheimer N.J."/>
            <person name="Kaplan N.O."/>
        </authorList>
    </citation>
    <scope>FUNCTION</scope>
    <scope>CATALYTIC ACTIVITY</scope>
</reference>
<reference key="9">
    <citation type="journal article" date="1985" name="J. Biol. Chem.">
        <title>Isolation and characterization of yeast strains carrying mutations in the glyceraldehyde-3-phosphate dehydrogenase genes.</title>
        <authorList>
            <person name="McAlister L."/>
            <person name="Holland M.J."/>
        </authorList>
    </citation>
    <scope>FUNCTION</scope>
    <scope>DISRUPTION PHENOTYPE</scope>
</reference>
<reference key="10">
    <citation type="journal article" date="1985" name="J. Biol. Chem.">
        <title>Differential expression of the three yeast glyceraldehyde-3-phosphate dehydrogenase genes.</title>
        <authorList>
            <person name="McAlister L."/>
            <person name="Holland M.J."/>
        </authorList>
    </citation>
    <scope>FUNCTION</scope>
    <scope>SUBUNIT</scope>
    <scope>CATALYTIC ACTIVITY</scope>
    <scope>BIOPHYSICOCHEMICAL PROPERTIES</scope>
</reference>
<reference key="11">
    <citation type="journal article" date="1995" name="FEMS Microbiol. Lett.">
        <title>Differential synthesis of glyceraldehyde-3-phosphate dehydrogenase polypeptides in stressed yeast cells.</title>
        <authorList>
            <person name="Boucherie H."/>
            <person name="Bataille N."/>
            <person name="Fitch I.T."/>
            <person name="Perrot M."/>
            <person name="Tuite M.F."/>
        </authorList>
    </citation>
    <scope>INDUCTION</scope>
</reference>
<reference key="12">
    <citation type="journal article" date="2003" name="Nature">
        <title>Global analysis of protein expression in yeast.</title>
        <authorList>
            <person name="Ghaemmaghami S."/>
            <person name="Huh W.-K."/>
            <person name="Bower K."/>
            <person name="Howson R.W."/>
            <person name="Belle A."/>
            <person name="Dephoure N."/>
            <person name="O'Shea E.K."/>
            <person name="Weissman J.S."/>
        </authorList>
    </citation>
    <scope>LEVEL OF PROTEIN EXPRESSION [LARGE SCALE ANALYSIS]</scope>
</reference>
<reference key="13">
    <citation type="journal article" date="2012" name="Proteomics">
        <title>Sites of ubiquitin attachment in Saccharomyces cerevisiae.</title>
        <authorList>
            <person name="Starita L.M."/>
            <person name="Lo R.S."/>
            <person name="Eng J.K."/>
            <person name="von Haller P.D."/>
            <person name="Fields S."/>
        </authorList>
    </citation>
    <scope>UBIQUITINATION [LARGE SCALE ANALYSIS] AT LYS-63</scope>
    <scope>IDENTIFICATION BY MASS SPECTROMETRY [LARGE SCALE ANALYSIS]</scope>
</reference>
<sequence length="332" mass="35847">MVRVAINGFGRIGRLVMRIALQRKNVEVVALNDPFISNDYSAYMFKYDSTHGRYAGEVSHDDKHIIVDGHKIATFQERDPANLPWASLNIDIAIDSTGVFKELDTAQKHIDAGAKKVVITAPSSTAPMFVMGVNEEKYTSDLKIVSNASCTTNCLAPLAKVINDAFGIEEGLMTTVHSMTATQKTVDGPSHKDWRGGRTASGNIIPSSTGAAKAVGKVLPELQGKLTGMAFRVPTVDVSVVDLTVKLNKETTYDEIKKVVKAAAEGKLKGVLGYTEDAVVSSDFLGDSNSSIFDAAAGIQLSPKFVKLVSWYDNEYGYSTRVVDLVEHVAKA</sequence>
<gene>
    <name evidence="13" type="primary">TDH2</name>
    <name type="synonym">GPD2</name>
    <name type="ordered locus">YJR009C</name>
    <name type="ORF">J1433</name>
</gene>
<name>G3P2_YEAST</name>
<protein>
    <recommendedName>
        <fullName evidence="13">Glyceraldehyde-3-phosphate dehydrogenase 2</fullName>
        <shortName evidence="13">GAPDH 2</shortName>
        <ecNumber evidence="9">1.2.1.12</ecNumber>
    </recommendedName>
    <alternativeName>
        <fullName evidence="13">Triose-phosphate dehydrogenase 1</fullName>
    </alternativeName>
</protein>
<evidence type="ECO:0000250" key="1">
    <source>
        <dbReference type="UniProtKB" id="P00359"/>
    </source>
</evidence>
<evidence type="ECO:0000250" key="2">
    <source>
        <dbReference type="UniProtKB" id="P00360"/>
    </source>
</evidence>
<evidence type="ECO:0000250" key="3">
    <source>
        <dbReference type="UniProtKB" id="P04406"/>
    </source>
</evidence>
<evidence type="ECO:0000250" key="4">
    <source>
        <dbReference type="UniProtKB" id="P22513"/>
    </source>
</evidence>
<evidence type="ECO:0000255" key="5">
    <source>
        <dbReference type="PROSITE-ProRule" id="PRU10009"/>
    </source>
</evidence>
<evidence type="ECO:0000269" key="6">
    <source>
    </source>
</evidence>
<evidence type="ECO:0000269" key="7">
    <source>
    </source>
</evidence>
<evidence type="ECO:0000269" key="8">
    <source>
    </source>
</evidence>
<evidence type="ECO:0000269" key="9">
    <source>
    </source>
</evidence>
<evidence type="ECO:0000269" key="10">
    <source>
    </source>
</evidence>
<evidence type="ECO:0000269" key="11">
    <source>
    </source>
</evidence>
<evidence type="ECO:0000269" key="12">
    <source ref="6"/>
</evidence>
<evidence type="ECO:0000303" key="13">
    <source>
    </source>
</evidence>
<evidence type="ECO:0000303" key="14">
    <source>
    </source>
</evidence>
<evidence type="ECO:0000305" key="15"/>
<evidence type="ECO:0007744" key="16">
    <source>
    </source>
</evidence>